<evidence type="ECO:0000269" key="1">
    <source>
    </source>
</evidence>
<evidence type="ECO:0000269" key="2">
    <source>
    </source>
</evidence>
<evidence type="ECO:0000269" key="3">
    <source>
    </source>
</evidence>
<evidence type="ECO:0000269" key="4">
    <source>
    </source>
</evidence>
<evidence type="ECO:0000269" key="5">
    <source>
    </source>
</evidence>
<evidence type="ECO:0000269" key="6">
    <source>
    </source>
</evidence>
<evidence type="ECO:0000269" key="7">
    <source>
    </source>
</evidence>
<evidence type="ECO:0000269" key="8">
    <source>
    </source>
</evidence>
<evidence type="ECO:0000303" key="9">
    <source>
    </source>
</evidence>
<evidence type="ECO:0000303" key="10">
    <source>
    </source>
</evidence>
<evidence type="ECO:0000303" key="11">
    <source>
    </source>
</evidence>
<evidence type="ECO:0000305" key="12"/>
<evidence type="ECO:0000305" key="13">
    <source>
    </source>
</evidence>
<evidence type="ECO:0000305" key="14">
    <source>
    </source>
</evidence>
<evidence type="ECO:0000305" key="15">
    <source>
    </source>
</evidence>
<evidence type="ECO:0000305" key="16">
    <source>
    </source>
</evidence>
<evidence type="ECO:0007744" key="17">
    <source>
        <dbReference type="PDB" id="4UOX"/>
    </source>
</evidence>
<evidence type="ECO:0007744" key="18">
    <source>
        <dbReference type="PDB" id="4UOY"/>
    </source>
</evidence>
<evidence type="ECO:0007744" key="19">
    <source>
        <dbReference type="PDB" id="5H7D"/>
    </source>
</evidence>
<evidence type="ECO:0007744" key="20">
    <source>
        <dbReference type="PDB" id="5X3F"/>
    </source>
</evidence>
<evidence type="ECO:0007829" key="21">
    <source>
        <dbReference type="PDB" id="4UOX"/>
    </source>
</evidence>
<evidence type="ECO:0007829" key="22">
    <source>
        <dbReference type="PDB" id="4UOY"/>
    </source>
</evidence>
<organism>
    <name type="scientific">Escherichia coli (strain K12)</name>
    <dbReference type="NCBI Taxonomy" id="83333"/>
    <lineage>
        <taxon>Bacteria</taxon>
        <taxon>Pseudomonadati</taxon>
        <taxon>Pseudomonadota</taxon>
        <taxon>Gammaproteobacteria</taxon>
        <taxon>Enterobacterales</taxon>
        <taxon>Enterobacteriaceae</taxon>
        <taxon>Escherichia</taxon>
    </lineage>
</organism>
<gene>
    <name evidence="10" type="primary">patA</name>
    <name type="synonym">ygjG</name>
    <name type="ordered locus">b3073</name>
    <name type="ordered locus">JW5510</name>
</gene>
<feature type="chain" id="PRO_0000120507" description="Putrescine aminotransferase">
    <location>
        <begin position="1"/>
        <end position="459"/>
    </location>
</feature>
<feature type="binding site" description="in other chain" evidence="5">
    <location>
        <begin position="150"/>
        <end position="151"/>
    </location>
    <ligand>
        <name>pyridoxal 5'-phosphate</name>
        <dbReference type="ChEBI" id="CHEBI:597326"/>
        <note>ligand shared between dimeric partners</note>
    </ligand>
</feature>
<feature type="binding site" description="in other chain" evidence="5">
    <location>
        <position position="274"/>
    </location>
    <ligand>
        <name>pyridoxal 5'-phosphate</name>
        <dbReference type="ChEBI" id="CHEBI:597326"/>
        <note>ligand shared between dimeric partners</note>
    </ligand>
</feature>
<feature type="binding site" evidence="5">
    <location>
        <position position="332"/>
    </location>
    <ligand>
        <name>pyridoxal 5'-phosphate</name>
        <dbReference type="ChEBI" id="CHEBI:597326"/>
        <note>ligand shared between dimeric partners</note>
    </ligand>
</feature>
<feature type="modified residue" description="N6-(pyridoxal phosphate)lysine" evidence="5 18">
    <location>
        <position position="300"/>
    </location>
</feature>
<feature type="helix" evidence="21">
    <location>
        <begin position="10"/>
        <end position="22"/>
    </location>
</feature>
<feature type="helix" evidence="21">
    <location>
        <begin position="28"/>
        <end position="45"/>
    </location>
</feature>
<feature type="helix" evidence="21">
    <location>
        <begin position="48"/>
        <end position="56"/>
    </location>
</feature>
<feature type="helix" evidence="21">
    <location>
        <begin position="60"/>
        <end position="62"/>
    </location>
</feature>
<feature type="strand" evidence="21">
    <location>
        <begin position="66"/>
        <end position="70"/>
    </location>
</feature>
<feature type="strand" evidence="21">
    <location>
        <begin position="75"/>
        <end position="78"/>
    </location>
</feature>
<feature type="strand" evidence="21">
    <location>
        <begin position="83"/>
        <end position="88"/>
    </location>
</feature>
<feature type="turn" evidence="21">
    <location>
        <begin position="89"/>
        <end position="93"/>
    </location>
</feature>
<feature type="helix" evidence="21">
    <location>
        <begin position="101"/>
        <end position="113"/>
    </location>
</feature>
<feature type="strand" evidence="21">
    <location>
        <begin position="119"/>
        <end position="122"/>
    </location>
</feature>
<feature type="helix" evidence="21">
    <location>
        <begin position="124"/>
        <end position="136"/>
    </location>
</feature>
<feature type="strand" evidence="21">
    <location>
        <begin position="141"/>
        <end position="149"/>
    </location>
</feature>
<feature type="helix" evidence="21">
    <location>
        <begin position="150"/>
        <end position="165"/>
    </location>
</feature>
<feature type="turn" evidence="21">
    <location>
        <begin position="166"/>
        <end position="169"/>
    </location>
</feature>
<feature type="strand" evidence="21">
    <location>
        <begin position="172"/>
        <end position="176"/>
    </location>
</feature>
<feature type="helix" evidence="21">
    <location>
        <begin position="185"/>
        <end position="190"/>
    </location>
</feature>
<feature type="helix" evidence="21">
    <location>
        <begin position="194"/>
        <end position="197"/>
    </location>
</feature>
<feature type="helix" evidence="21">
    <location>
        <begin position="198"/>
        <end position="200"/>
    </location>
</feature>
<feature type="strand" evidence="21">
    <location>
        <begin position="207"/>
        <end position="210"/>
    </location>
</feature>
<feature type="helix" evidence="21">
    <location>
        <begin position="215"/>
        <end position="228"/>
    </location>
</feature>
<feature type="strand" evidence="21">
    <location>
        <begin position="232"/>
        <end position="237"/>
    </location>
</feature>
<feature type="strand" evidence="21">
    <location>
        <begin position="239"/>
        <end position="241"/>
    </location>
</feature>
<feature type="turn" evidence="21">
    <location>
        <begin position="242"/>
        <end position="245"/>
    </location>
</feature>
<feature type="helix" evidence="21">
    <location>
        <begin position="253"/>
        <end position="264"/>
    </location>
</feature>
<feature type="strand" evidence="21">
    <location>
        <begin position="267"/>
        <end position="271"/>
    </location>
</feature>
<feature type="turn" evidence="21">
    <location>
        <begin position="273"/>
        <end position="280"/>
    </location>
</feature>
<feature type="strand" evidence="21">
    <location>
        <begin position="281"/>
        <end position="284"/>
    </location>
</feature>
<feature type="helix" evidence="21">
    <location>
        <begin position="285"/>
        <end position="287"/>
    </location>
</feature>
<feature type="turn" evidence="21">
    <location>
        <begin position="288"/>
        <end position="290"/>
    </location>
</feature>
<feature type="strand" evidence="21">
    <location>
        <begin position="294"/>
        <end position="298"/>
    </location>
</feature>
<feature type="helix" evidence="21">
    <location>
        <begin position="300"/>
        <end position="303"/>
    </location>
</feature>
<feature type="turn" evidence="21">
    <location>
        <begin position="304"/>
        <end position="306"/>
    </location>
</feature>
<feature type="strand" evidence="21">
    <location>
        <begin position="310"/>
        <end position="315"/>
    </location>
</feature>
<feature type="helix" evidence="21">
    <location>
        <begin position="316"/>
        <end position="319"/>
    </location>
</feature>
<feature type="helix" evidence="21">
    <location>
        <begin position="320"/>
        <end position="322"/>
    </location>
</feature>
<feature type="strand" evidence="22">
    <location>
        <begin position="323"/>
        <end position="325"/>
    </location>
</feature>
<feature type="helix" evidence="21">
    <location>
        <begin position="337"/>
        <end position="352"/>
    </location>
</feature>
<feature type="helix" evidence="21">
    <location>
        <begin position="355"/>
        <end position="376"/>
    </location>
</feature>
<feature type="turn" evidence="21">
    <location>
        <begin position="378"/>
        <end position="380"/>
    </location>
</feature>
<feature type="strand" evidence="21">
    <location>
        <begin position="381"/>
        <end position="387"/>
    </location>
</feature>
<feature type="strand" evidence="21">
    <location>
        <begin position="390"/>
        <end position="397"/>
    </location>
</feature>
<feature type="helix" evidence="21">
    <location>
        <begin position="398"/>
        <end position="410"/>
    </location>
</feature>
<feature type="strand" evidence="22">
    <location>
        <begin position="416"/>
        <end position="418"/>
    </location>
</feature>
<feature type="strand" evidence="21">
    <location>
        <begin position="419"/>
        <end position="427"/>
    </location>
</feature>
<feature type="helix" evidence="21">
    <location>
        <begin position="435"/>
        <end position="456"/>
    </location>
</feature>
<dbReference type="EC" id="2.6.1.82" evidence="1 8"/>
<dbReference type="EC" id="2.6.1.29" evidence="1 7 8 14"/>
<dbReference type="EMBL" id="U18997">
    <property type="protein sequence ID" value="AAA57874.1"/>
    <property type="status" value="ALT_INIT"/>
    <property type="molecule type" value="Genomic_DNA"/>
</dbReference>
<dbReference type="EMBL" id="U28379">
    <property type="protein sequence ID" value="AAA89152.1"/>
    <property type="status" value="ALT_INIT"/>
    <property type="molecule type" value="Genomic_DNA"/>
</dbReference>
<dbReference type="EMBL" id="U00096">
    <property type="protein sequence ID" value="AAC76108.3"/>
    <property type="molecule type" value="Genomic_DNA"/>
</dbReference>
<dbReference type="EMBL" id="AP009048">
    <property type="protein sequence ID" value="BAE77123.1"/>
    <property type="status" value="ALT_INIT"/>
    <property type="molecule type" value="Genomic_DNA"/>
</dbReference>
<dbReference type="PIR" id="F65095">
    <property type="entry name" value="F65095"/>
</dbReference>
<dbReference type="RefSeq" id="NP_417544.5">
    <property type="nucleotide sequence ID" value="NC_000913.3"/>
</dbReference>
<dbReference type="RefSeq" id="WP_001301395.1">
    <property type="nucleotide sequence ID" value="NZ_LN832404.1"/>
</dbReference>
<dbReference type="PDB" id="4UOX">
    <property type="method" value="X-ray"/>
    <property type="resolution" value="2.08 A"/>
    <property type="chains" value="A/B/C/D=1-459"/>
</dbReference>
<dbReference type="PDB" id="4UOY">
    <property type="method" value="X-ray"/>
    <property type="resolution" value="2.30 A"/>
    <property type="chains" value="A/B/C/D=1-459"/>
</dbReference>
<dbReference type="PDB" id="5H7D">
    <property type="method" value="X-ray"/>
    <property type="resolution" value="2.57 A"/>
    <property type="chains" value="A/B/C/D/I/J/M/N=7-453"/>
</dbReference>
<dbReference type="PDB" id="5X3F">
    <property type="method" value="X-ray"/>
    <property type="resolution" value="3.38 A"/>
    <property type="chains" value="A=7-453"/>
</dbReference>
<dbReference type="PDB" id="8CPL">
    <property type="method" value="X-ray"/>
    <property type="resolution" value="1.60 A"/>
    <property type="chains" value="A/B/C/D=7-457"/>
</dbReference>
<dbReference type="PDB" id="8R2P">
    <property type="method" value="X-ray"/>
    <property type="resolution" value="2.22 A"/>
    <property type="chains" value="A/B/C/D=7-457"/>
</dbReference>
<dbReference type="PDBsum" id="4UOX"/>
<dbReference type="PDBsum" id="4UOY"/>
<dbReference type="PDBsum" id="5H7D"/>
<dbReference type="PDBsum" id="5X3F"/>
<dbReference type="PDBsum" id="8CPL"/>
<dbReference type="PDBsum" id="8R2P"/>
<dbReference type="SMR" id="P42588"/>
<dbReference type="BioGRID" id="4262398">
    <property type="interactions" value="14"/>
</dbReference>
<dbReference type="DIP" id="DIP-12233N"/>
<dbReference type="FunCoup" id="P42588">
    <property type="interactions" value="179"/>
</dbReference>
<dbReference type="IntAct" id="P42588">
    <property type="interactions" value="1"/>
</dbReference>
<dbReference type="MINT" id="P42588"/>
<dbReference type="STRING" id="511145.b3073"/>
<dbReference type="jPOST" id="P42588"/>
<dbReference type="PaxDb" id="511145-b3073"/>
<dbReference type="EnsemblBacteria" id="AAC76108">
    <property type="protein sequence ID" value="AAC76108"/>
    <property type="gene ID" value="b3073"/>
</dbReference>
<dbReference type="GeneID" id="947120"/>
<dbReference type="KEGG" id="ecj:JW5510"/>
<dbReference type="KEGG" id="eco:b3073"/>
<dbReference type="KEGG" id="ecoc:C3026_16785"/>
<dbReference type="PATRIC" id="fig|511145.12.peg.3167"/>
<dbReference type="EchoBASE" id="EB2577"/>
<dbReference type="eggNOG" id="COG4992">
    <property type="taxonomic scope" value="Bacteria"/>
</dbReference>
<dbReference type="HOGENOM" id="CLU_016922_10_0_6"/>
<dbReference type="InParanoid" id="P42588"/>
<dbReference type="OMA" id="VCEGNFH"/>
<dbReference type="PhylomeDB" id="P42588"/>
<dbReference type="BioCyc" id="EcoCyc:G7596-MONOMER"/>
<dbReference type="BioCyc" id="MetaCyc:G7596-MONOMER"/>
<dbReference type="BRENDA" id="2.6.1.82">
    <property type="organism ID" value="2026"/>
</dbReference>
<dbReference type="SABIO-RK" id="P42588"/>
<dbReference type="UniPathway" id="UPA00188">
    <property type="reaction ID" value="UER00290"/>
</dbReference>
<dbReference type="EvolutionaryTrace" id="P42588"/>
<dbReference type="PRO" id="PR:P42588"/>
<dbReference type="Proteomes" id="UP000000625">
    <property type="component" value="Chromosome"/>
</dbReference>
<dbReference type="GO" id="GO:0005829">
    <property type="term" value="C:cytosol"/>
    <property type="evidence" value="ECO:0000314"/>
    <property type="project" value="EcoCyc"/>
</dbReference>
<dbReference type="GO" id="GO:0019161">
    <property type="term" value="F:diamine transaminase activity"/>
    <property type="evidence" value="ECO:0007669"/>
    <property type="project" value="UniProtKB-EC"/>
</dbReference>
<dbReference type="GO" id="GO:0042802">
    <property type="term" value="F:identical protein binding"/>
    <property type="evidence" value="ECO:0000318"/>
    <property type="project" value="GO_Central"/>
</dbReference>
<dbReference type="GO" id="GO:0042803">
    <property type="term" value="F:protein homodimerization activity"/>
    <property type="evidence" value="ECO:0000314"/>
    <property type="project" value="EcoCyc"/>
</dbReference>
<dbReference type="GO" id="GO:0033094">
    <property type="term" value="F:putrescine--2-oxoglutarate transaminase activity"/>
    <property type="evidence" value="ECO:0000314"/>
    <property type="project" value="EcoCyc"/>
</dbReference>
<dbReference type="GO" id="GO:0030170">
    <property type="term" value="F:pyridoxal phosphate binding"/>
    <property type="evidence" value="ECO:0000314"/>
    <property type="project" value="EcoCyc"/>
</dbReference>
<dbReference type="GO" id="GO:0019477">
    <property type="term" value="P:L-lysine catabolic process"/>
    <property type="evidence" value="ECO:0007669"/>
    <property type="project" value="UniProtKB-UniRule"/>
</dbReference>
<dbReference type="GO" id="GO:0009447">
    <property type="term" value="P:putrescine catabolic process"/>
    <property type="evidence" value="ECO:0000314"/>
    <property type="project" value="EcoCyc"/>
</dbReference>
<dbReference type="CDD" id="cd00610">
    <property type="entry name" value="OAT_like"/>
    <property type="match status" value="1"/>
</dbReference>
<dbReference type="FunFam" id="3.40.640.10:FF:000004">
    <property type="entry name" value="Acetylornithine aminotransferase"/>
    <property type="match status" value="1"/>
</dbReference>
<dbReference type="Gene3D" id="3.90.1150.10">
    <property type="entry name" value="Aspartate Aminotransferase, domain 1"/>
    <property type="match status" value="1"/>
</dbReference>
<dbReference type="Gene3D" id="3.40.640.10">
    <property type="entry name" value="Type I PLP-dependent aspartate aminotransferase-like (Major domain)"/>
    <property type="match status" value="1"/>
</dbReference>
<dbReference type="HAMAP" id="MF_01276">
    <property type="entry name" value="Putres_aminotrans_3"/>
    <property type="match status" value="1"/>
</dbReference>
<dbReference type="InterPro" id="IPR005814">
    <property type="entry name" value="Aminotrans_3"/>
</dbReference>
<dbReference type="InterPro" id="IPR049704">
    <property type="entry name" value="Aminotrans_3_PPA_site"/>
</dbReference>
<dbReference type="InterPro" id="IPR050103">
    <property type="entry name" value="Class-III_PLP-dep_AT"/>
</dbReference>
<dbReference type="InterPro" id="IPR017747">
    <property type="entry name" value="Putrescine_aminotransferase"/>
</dbReference>
<dbReference type="InterPro" id="IPR015424">
    <property type="entry name" value="PyrdxlP-dep_Trfase"/>
</dbReference>
<dbReference type="InterPro" id="IPR015421">
    <property type="entry name" value="PyrdxlP-dep_Trfase_major"/>
</dbReference>
<dbReference type="InterPro" id="IPR015422">
    <property type="entry name" value="PyrdxlP-dep_Trfase_small"/>
</dbReference>
<dbReference type="NCBIfam" id="NF008570">
    <property type="entry name" value="PRK11522.1"/>
    <property type="match status" value="1"/>
</dbReference>
<dbReference type="NCBIfam" id="TIGR03372">
    <property type="entry name" value="putres_am_tran"/>
    <property type="match status" value="1"/>
</dbReference>
<dbReference type="PANTHER" id="PTHR11986">
    <property type="entry name" value="AMINOTRANSFERASE CLASS III"/>
    <property type="match status" value="1"/>
</dbReference>
<dbReference type="PANTHER" id="PTHR11986:SF112">
    <property type="entry name" value="PUTRESCINE AMINOTRANSFERASE"/>
    <property type="match status" value="1"/>
</dbReference>
<dbReference type="Pfam" id="PF00202">
    <property type="entry name" value="Aminotran_3"/>
    <property type="match status" value="1"/>
</dbReference>
<dbReference type="PIRSF" id="PIRSF000521">
    <property type="entry name" value="Transaminase_4ab_Lys_Orn"/>
    <property type="match status" value="1"/>
</dbReference>
<dbReference type="SUPFAM" id="SSF53383">
    <property type="entry name" value="PLP-dependent transferases"/>
    <property type="match status" value="1"/>
</dbReference>
<dbReference type="PROSITE" id="PS00600">
    <property type="entry name" value="AA_TRANSFER_CLASS_3"/>
    <property type="match status" value="1"/>
</dbReference>
<protein>
    <recommendedName>
        <fullName evidence="9">Putrescine aminotransferase</fullName>
        <shortName>PAT</shortName>
        <shortName evidence="11">PATase</shortName>
        <ecNumber evidence="1 8">2.6.1.82</ecNumber>
    </recommendedName>
    <alternativeName>
        <fullName evidence="13">Cadaverine transaminase</fullName>
    </alternativeName>
    <alternativeName>
        <fullName>Diamine transaminase</fullName>
        <ecNumber evidence="1 7 8 14">2.6.1.29</ecNumber>
    </alternativeName>
    <alternativeName>
        <fullName evidence="13">Putrescine transaminase</fullName>
    </alternativeName>
    <alternativeName>
        <fullName>Putrescine--2-oxoglutaric acid transaminase</fullName>
    </alternativeName>
    <alternativeName>
        <fullName evidence="9">Putrescine:2-OG aminotransferase</fullName>
    </alternativeName>
</protein>
<comment type="function">
    <text evidence="1 2 7 8">Catalyzes the aminotransferase reaction from putrescine to 2-oxoglutarate, leading to glutamate and 4-aminobutanal, which spontaneously cyclizes to form 1-pyrroline (PubMed:12617754, PubMed:3510672). This is the first step in one of two pathways for putrescine degradation, where putrescine is converted into 4-aminobutanoate (gamma-aminobutyrate or GABA) via 4-aminobutanal, which allows E.coli to grow on putrescine as the sole nitrogen source (PubMed:22636776, PubMed:3510672). Also functions as a cadaverine transaminase in a a L-lysine degradation pathway to succinate that proceeds via cadaverine, glutarate and L-2-hydroxyglutarate (PubMed:12617754, PubMed:30498244). Is also able to transaminate spermidine, in lower extent, but not ornithine. Alpha-ketobutyrate and pyruvate can also act as amino acceptors, although much less efficiently (PubMed:12617754).</text>
</comment>
<comment type="catalytic activity">
    <reaction evidence="1 7 8 14">
        <text>an alkane-alpha,omega-diamine + 2-oxoglutarate = an omega-aminoaldehyde + L-glutamate</text>
        <dbReference type="Rhea" id="RHEA:18217"/>
        <dbReference type="Rhea" id="RHEA-COMP:9766"/>
        <dbReference type="Rhea" id="RHEA-COMP:12750"/>
        <dbReference type="ChEBI" id="CHEBI:16810"/>
        <dbReference type="ChEBI" id="CHEBI:29985"/>
        <dbReference type="ChEBI" id="CHEBI:70977"/>
        <dbReference type="ChEBI" id="CHEBI:133427"/>
        <dbReference type="EC" id="2.6.1.29"/>
    </reaction>
    <physiologicalReaction direction="left-to-right" evidence="13 15 16">
        <dbReference type="Rhea" id="RHEA:18218"/>
    </physiologicalReaction>
</comment>
<comment type="catalytic activity">
    <reaction evidence="1 8">
        <text>putrescine + 2-oxoglutarate = 1-pyrroline + L-glutamate + H2O</text>
        <dbReference type="Rhea" id="RHEA:12268"/>
        <dbReference type="ChEBI" id="CHEBI:15377"/>
        <dbReference type="ChEBI" id="CHEBI:16810"/>
        <dbReference type="ChEBI" id="CHEBI:29985"/>
        <dbReference type="ChEBI" id="CHEBI:36781"/>
        <dbReference type="ChEBI" id="CHEBI:326268"/>
        <dbReference type="EC" id="2.6.1.82"/>
    </reaction>
    <physiologicalReaction direction="left-to-right" evidence="13 16">
        <dbReference type="Rhea" id="RHEA:12269"/>
    </physiologicalReaction>
</comment>
<comment type="catalytic activity">
    <reaction evidence="1 7 14">
        <text>cadaverine + 2-oxoglutarate = 5-aminopentanal + L-glutamate</text>
        <dbReference type="Rhea" id="RHEA:61624"/>
        <dbReference type="ChEBI" id="CHEBI:16810"/>
        <dbReference type="ChEBI" id="CHEBI:29985"/>
        <dbReference type="ChEBI" id="CHEBI:58384"/>
        <dbReference type="ChEBI" id="CHEBI:144896"/>
    </reaction>
    <physiologicalReaction direction="left-to-right" evidence="15">
        <dbReference type="Rhea" id="RHEA:61625"/>
    </physiologicalReaction>
</comment>
<comment type="cofactor">
    <cofactor evidence="5">
        <name>pyridoxal 5'-phosphate</name>
        <dbReference type="ChEBI" id="CHEBI:597326"/>
    </cofactor>
</comment>
<comment type="biophysicochemical properties">
    <kinetics>
        <KM evidence="8">22.5 uM for putrescine</KM>
    </kinetics>
    <phDependence>
        <text evidence="1 8">Optimum pH is 7.2 (PubMed:3510672). Optimum pH is 9.0. Active at alkaline pH.</text>
    </phDependence>
    <temperatureDependence>
        <text evidence="1">Optimum temperature is 60 degrees Celsius. Highly active from 20 to 80 degrees Celsius.</text>
    </temperatureDependence>
</comment>
<comment type="pathway">
    <text evidence="2 8">Amine and polyamine degradation; putrescine degradation; 4-aminobutanal from putrescine (transaminase route): step 1/1.</text>
</comment>
<comment type="pathway">
    <text evidence="15">Amino-acid degradation.</text>
</comment>
<comment type="subunit">
    <text evidence="3">Homodimer.</text>
</comment>
<comment type="induction">
    <text evidence="1 4">Up-regulated under nitrogen starvation conditions. Expression is sigma-54-dependent (PubMed:12617754). Up-regulated by putrescine; this gene expression regulation is controlled by at least two sigma factors: rpoS under excess nitrogen conditions and rpoN under nitrogen-starvation conditions (PubMed:24906570).</text>
</comment>
<comment type="disruption phenotype">
    <text evidence="2">Cells lacking this gene show a high decrease in putrescine aminotransferase activity, but are still able to grow with putrescine as the sole nitrogen source. However, a mutant lacking both patA and either puuA, puuB or puuC cannot grow with putrescine as the sole nitrogen source.</text>
</comment>
<comment type="biotechnology">
    <text evidence="6">Can be used in the industrial production of the value-added compound 5-aminovalerate.</text>
</comment>
<comment type="similarity">
    <text evidence="12">Belongs to the class-III pyridoxal-phosphate-dependent aminotransferase family. Putrescine aminotransferase subfamily.</text>
</comment>
<comment type="sequence caution" evidence="12">
    <conflict type="erroneous initiation">
        <sequence resource="EMBL-CDS" id="AAA57874"/>
    </conflict>
</comment>
<comment type="sequence caution" evidence="12">
    <conflict type="erroneous initiation">
        <sequence resource="EMBL-CDS" id="AAA89152"/>
    </conflict>
</comment>
<comment type="sequence caution" evidence="12">
    <conflict type="erroneous initiation">
        <sequence resource="EMBL-CDS" id="BAE77123"/>
    </conflict>
</comment>
<accession>P42588</accession>
<accession>P78108</accession>
<accession>Q2M9D3</accession>
<accession>Q46873</accession>
<proteinExistence type="evidence at protein level"/>
<name>PAT_ECOLI</name>
<keyword id="KW-0002">3D-structure</keyword>
<keyword id="KW-0032">Aminotransferase</keyword>
<keyword id="KW-0663">Pyridoxal phosphate</keyword>
<keyword id="KW-1185">Reference proteome</keyword>
<keyword id="KW-0808">Transferase</keyword>
<sequence length="459" mass="49661">MNRLPSSASALACSAHALNLIEKRTLDHEEMKALNREVIEYFKEHVNPGFLEYRKSVTAGGDYGAVEWQAGSLNTLVDTQGQEFIDCLGGFGIFNVGHRNPVVVSAVQNQLAKQPLHSQELLDPLRAMLAKTLAALTPGKLKYSFFCNSGTESVEAALKLAKAYQSPRGKFTFIATSGAFHGKSLGALSATAKSTFRKPFMPLLPGFRHVPFGNIEAMRTALNECKKTGDDVAAVILEPIQGEGGVILPPPGYLTAVRKLCDEFGALMILDEVQTGMGRTGKMFACEHENVQPDILCLAKALGGGVMPIGATIATEEVFSVLFDNPFLHTTTFGGNPLACAAALATINVLLEQNLPAQAEQKGDMLLDGFRQLAREYPDLVQEARGKGMLMAIEFVDNEIGYNFASEMFRQRVLVAGTLNNAKTIRIEPPLTLTIEQCELVIKAARKALAAMRVSVEEA</sequence>
<reference key="1">
    <citation type="journal article" date="1997" name="Science">
        <title>The complete genome sequence of Escherichia coli K-12.</title>
        <authorList>
            <person name="Blattner F.R."/>
            <person name="Plunkett G. III"/>
            <person name="Bloch C.A."/>
            <person name="Perna N.T."/>
            <person name="Burland V."/>
            <person name="Riley M."/>
            <person name="Collado-Vides J."/>
            <person name="Glasner J.D."/>
            <person name="Rode C.K."/>
            <person name="Mayhew G.F."/>
            <person name="Gregor J."/>
            <person name="Davis N.W."/>
            <person name="Kirkpatrick H.A."/>
            <person name="Goeden M.A."/>
            <person name="Rose D.J."/>
            <person name="Mau B."/>
            <person name="Shao Y."/>
        </authorList>
    </citation>
    <scope>NUCLEOTIDE SEQUENCE [LARGE SCALE GENOMIC DNA]</scope>
    <source>
        <strain>K12 / MG1655 / ATCC 47076</strain>
    </source>
</reference>
<reference key="2">
    <citation type="journal article" date="2006" name="Mol. Syst. Biol.">
        <title>Highly accurate genome sequences of Escherichia coli K-12 strains MG1655 and W3110.</title>
        <authorList>
            <person name="Hayashi K."/>
            <person name="Morooka N."/>
            <person name="Yamamoto Y."/>
            <person name="Fujita K."/>
            <person name="Isono K."/>
            <person name="Choi S."/>
            <person name="Ohtsubo E."/>
            <person name="Baba T."/>
            <person name="Wanner B.L."/>
            <person name="Mori H."/>
            <person name="Horiuchi T."/>
        </authorList>
    </citation>
    <scope>NUCLEOTIDE SEQUENCE [LARGE SCALE GENOMIC DNA]</scope>
    <source>
        <strain>K12 / W3110 / ATCC 27325 / DSM 5911</strain>
    </source>
</reference>
<reference key="3">
    <citation type="journal article" date="1986" name="Biochim. Biophys. Acta">
        <title>A pathway for putrescine catabolism in Escherichia coli.</title>
        <authorList>
            <person name="Prieto-Santos M.I."/>
            <person name="Martin-Checa J."/>
            <person name="Balana-Fouce R."/>
            <person name="Garrido-Pertierra A."/>
        </authorList>
    </citation>
    <scope>FUNCTION</scope>
    <scope>CATALYTIC ACTIVITY</scope>
    <scope>BIOPHYSICOCHEMICAL PROPERTIES</scope>
    <scope>PATHWAY</scope>
</reference>
<reference key="4">
    <citation type="journal article" date="2003" name="BMC Microbiol.">
        <title>Molecular cloning and characterization of Escherichia coli K12 ygjG gene.</title>
        <authorList>
            <person name="Samsonova N.N."/>
            <person name="Smirnov S.V."/>
            <person name="Altman I.B."/>
            <person name="Ptitsyn L.R."/>
        </authorList>
    </citation>
    <scope>FUNCTION</scope>
    <scope>CATALYTIC ACTIVITY</scope>
    <scope>IDENTIFICATION OF START CODON</scope>
    <scope>BIOPHYSICOCHEMICAL PROPERTIES</scope>
    <scope>SUBSTRATE SPECIFICITY</scope>
    <scope>INDUCTION</scope>
    <source>
        <strain>K12 / MG1655 / ATCC 47076</strain>
    </source>
</reference>
<reference key="5">
    <citation type="journal article" date="2012" name="Acta Crystallogr. F">
        <title>Crystallization and preliminary X-ray crystallographic analysis of YgjG from Escherichia coli.</title>
        <authorList>
            <person name="Yeo S.J."/>
            <person name="Jeong J.H."/>
            <person name="Yu S.N."/>
            <person name="Kim Y.G."/>
        </authorList>
    </citation>
    <scope>SUBUNIT</scope>
    <source>
        <strain>K12</strain>
    </source>
</reference>
<reference key="6">
    <citation type="journal article" date="2012" name="J. Bacteriol.">
        <title>Pathway and enzyme redundancy in putrescine catabolism in Escherichia coli.</title>
        <authorList>
            <person name="Schneider B.L."/>
            <person name="Reitzer L."/>
        </authorList>
    </citation>
    <scope>FUNCTION</scope>
    <scope>PATHWAY</scope>
    <scope>DISRUPTION PHENOTYPE</scope>
    <source>
        <strain>K12 / W3110 / ATCC 27325 / DSM 5911</strain>
    </source>
</reference>
<reference key="7">
    <citation type="journal article" date="2014" name="Arch. Microbiol.">
        <title>Two mechanisms for putrescine-dependent transcriptional expression of the putrescine aminotransferase gene, ygjG, in Escherichia coli.</title>
        <authorList>
            <person name="Kim Y.S."/>
            <person name="Shin H.C."/>
            <person name="Lee J.H."/>
        </authorList>
    </citation>
    <scope>INDUCTION</scope>
</reference>
<reference key="8">
    <citation type="journal article" date="2017" name="Bioresour. Technol.">
        <title>A new metabolic route for the fermentative production of 5-aminovalerate from glucose and alternative carbon sources.</title>
        <authorList>
            <person name="Jorge J.M.P."/>
            <person name="Perez-Garcia F."/>
            <person name="Wendisch V.F."/>
        </authorList>
    </citation>
    <scope>BIOTECHNOLOGY</scope>
    <scope>CATALYTIC ACTIVITY</scope>
</reference>
<reference key="9">
    <citation type="journal article" date="2018" name="Nat. Commun.">
        <title>Widespread bacterial lysine degradation proceeding via glutarate and L-2-hydroxyglutarate.</title>
        <authorList>
            <person name="Knorr S."/>
            <person name="Sinn M."/>
            <person name="Galetskiy D."/>
            <person name="Williams R.M."/>
            <person name="Wang C."/>
            <person name="Mueller N."/>
            <person name="Mayans O."/>
            <person name="Schleheck D."/>
            <person name="Hartig J.S."/>
        </authorList>
    </citation>
    <scope>FUNCTION</scope>
    <scope>CATALYTIC ACTIVITY</scope>
    <scope>PATHWAY</scope>
</reference>
<reference evidence="17 18" key="10">
    <citation type="journal article" date="2014" name="PLoS ONE">
        <title>Structure of putrescine aminotransferase from Escherichia coli provides insights into the substrate specificity among class III aminotransferases.</title>
        <authorList>
            <person name="Cha H.J."/>
            <person name="Jeong J.H."/>
            <person name="Rojviriya C."/>
            <person name="Kim Y.G."/>
        </authorList>
    </citation>
    <scope>X-RAY CRYSTALLOGRAPHY (2.08 ANGSTROMS) IN COMPLEXES WITH PUTRESCINE AND PLP</scope>
    <scope>COFACTOR</scope>
    <scope>PYRIDOXAL-PHOSPHATE AT LYS-300</scope>
</reference>
<reference evidence="19 20" key="11">
    <citation type="journal article" date="2017" name="Sci. Rep.">
        <title>Construction of novel repeat proteins with rigid and predictable structures using a shared helix method.</title>
        <authorList>
            <person name="Youn S.J."/>
            <person name="Kwon N.Y."/>
            <person name="Lee J.H."/>
            <person name="Kim J.H."/>
            <person name="Choi J."/>
            <person name="Lee H."/>
            <person name="Lee J.O."/>
        </authorList>
    </citation>
    <scope>X-RAY CRYSTALLOGRAPHY (2.57 ANGSTROMS) OF 7-453</scope>
</reference>